<protein>
    <recommendedName>
        <fullName>Anthranilate phosphoribosyltransferase</fullName>
        <ecNumber>2.4.2.18</ecNumber>
    </recommendedName>
</protein>
<gene>
    <name type="primary">trp4</name>
    <name type="ORF">SPBC16G5.08</name>
</gene>
<comment type="catalytic activity">
    <reaction>
        <text>N-(5-phospho-beta-D-ribosyl)anthranilate + diphosphate = 5-phospho-alpha-D-ribose 1-diphosphate + anthranilate</text>
        <dbReference type="Rhea" id="RHEA:11768"/>
        <dbReference type="ChEBI" id="CHEBI:16567"/>
        <dbReference type="ChEBI" id="CHEBI:18277"/>
        <dbReference type="ChEBI" id="CHEBI:33019"/>
        <dbReference type="ChEBI" id="CHEBI:58017"/>
        <dbReference type="EC" id="2.4.2.18"/>
    </reaction>
</comment>
<comment type="pathway">
    <text>Amino-acid biosynthesis; L-tryptophan biosynthesis; L-tryptophan from chorismate: step 2/5.</text>
</comment>
<comment type="similarity">
    <text evidence="1">Belongs to the anthranilate phosphoribosyltransferase family.</text>
</comment>
<feature type="chain" id="PRO_0000154527" description="Anthranilate phosphoribosyltransferase">
    <location>
        <begin position="1"/>
        <end position="354"/>
    </location>
</feature>
<organism>
    <name type="scientific">Schizosaccharomyces pombe (strain 972 / ATCC 24843)</name>
    <name type="common">Fission yeast</name>
    <dbReference type="NCBI Taxonomy" id="284812"/>
    <lineage>
        <taxon>Eukaryota</taxon>
        <taxon>Fungi</taxon>
        <taxon>Dikarya</taxon>
        <taxon>Ascomycota</taxon>
        <taxon>Taphrinomycotina</taxon>
        <taxon>Schizosaccharomycetes</taxon>
        <taxon>Schizosaccharomycetales</taxon>
        <taxon>Schizosaccharomycetaceae</taxon>
        <taxon>Schizosaccharomyces</taxon>
    </lineage>
</organism>
<proteinExistence type="inferred from homology"/>
<evidence type="ECO:0000305" key="1"/>
<accession>O60122</accession>
<sequence length="354" mass="37556">MINTFNPEVRLAIHDLDKVGPAIPLENYEAALRAILTGKASPVETASFLASLHLTKAEEVPDILMQTVQILKSYSTPIANIEMVSPRFVDIVGTGGDGHNTFNVSTASAIVAAGAGLWVCKHGNKASTSASGSADLLMSFGCDLLNVTPKNIVSITEQCKFSFLFAPMCHPTLKNVAPIRKQLGLPTIFNLVGPLLNPIPTYARIIGVSKLSLGEVVAKTLLKLGAGRSLVVCGEEGLDEISPAGPTHTWLVRDGTITHEVYTPESFHLQSHPLSSVASGTPSANAILLEELLSNMLHANHPILDYVLMNTAALLHVAGMAESLREGVKIAQQSISSGAALRELSNFSTISQQP</sequence>
<reference key="1">
    <citation type="journal article" date="2002" name="Nature">
        <title>The genome sequence of Schizosaccharomyces pombe.</title>
        <authorList>
            <person name="Wood V."/>
            <person name="Gwilliam R."/>
            <person name="Rajandream M.A."/>
            <person name="Lyne M.H."/>
            <person name="Lyne R."/>
            <person name="Stewart A."/>
            <person name="Sgouros J.G."/>
            <person name="Peat N."/>
            <person name="Hayles J."/>
            <person name="Baker S.G."/>
            <person name="Basham D."/>
            <person name="Bowman S."/>
            <person name="Brooks K."/>
            <person name="Brown D."/>
            <person name="Brown S."/>
            <person name="Chillingworth T."/>
            <person name="Churcher C.M."/>
            <person name="Collins M."/>
            <person name="Connor R."/>
            <person name="Cronin A."/>
            <person name="Davis P."/>
            <person name="Feltwell T."/>
            <person name="Fraser A."/>
            <person name="Gentles S."/>
            <person name="Goble A."/>
            <person name="Hamlin N."/>
            <person name="Harris D.E."/>
            <person name="Hidalgo J."/>
            <person name="Hodgson G."/>
            <person name="Holroyd S."/>
            <person name="Hornsby T."/>
            <person name="Howarth S."/>
            <person name="Huckle E.J."/>
            <person name="Hunt S."/>
            <person name="Jagels K."/>
            <person name="James K.D."/>
            <person name="Jones L."/>
            <person name="Jones M."/>
            <person name="Leather S."/>
            <person name="McDonald S."/>
            <person name="McLean J."/>
            <person name="Mooney P."/>
            <person name="Moule S."/>
            <person name="Mungall K.L."/>
            <person name="Murphy L.D."/>
            <person name="Niblett D."/>
            <person name="Odell C."/>
            <person name="Oliver K."/>
            <person name="O'Neil S."/>
            <person name="Pearson D."/>
            <person name="Quail M.A."/>
            <person name="Rabbinowitsch E."/>
            <person name="Rutherford K.M."/>
            <person name="Rutter S."/>
            <person name="Saunders D."/>
            <person name="Seeger K."/>
            <person name="Sharp S."/>
            <person name="Skelton J."/>
            <person name="Simmonds M.N."/>
            <person name="Squares R."/>
            <person name="Squares S."/>
            <person name="Stevens K."/>
            <person name="Taylor K."/>
            <person name="Taylor R.G."/>
            <person name="Tivey A."/>
            <person name="Walsh S.V."/>
            <person name="Warren T."/>
            <person name="Whitehead S."/>
            <person name="Woodward J.R."/>
            <person name="Volckaert G."/>
            <person name="Aert R."/>
            <person name="Robben J."/>
            <person name="Grymonprez B."/>
            <person name="Weltjens I."/>
            <person name="Vanstreels E."/>
            <person name="Rieger M."/>
            <person name="Schaefer M."/>
            <person name="Mueller-Auer S."/>
            <person name="Gabel C."/>
            <person name="Fuchs M."/>
            <person name="Duesterhoeft A."/>
            <person name="Fritzc C."/>
            <person name="Holzer E."/>
            <person name="Moestl D."/>
            <person name="Hilbert H."/>
            <person name="Borzym K."/>
            <person name="Langer I."/>
            <person name="Beck A."/>
            <person name="Lehrach H."/>
            <person name="Reinhardt R."/>
            <person name="Pohl T.M."/>
            <person name="Eger P."/>
            <person name="Zimmermann W."/>
            <person name="Wedler H."/>
            <person name="Wambutt R."/>
            <person name="Purnelle B."/>
            <person name="Goffeau A."/>
            <person name="Cadieu E."/>
            <person name="Dreano S."/>
            <person name="Gloux S."/>
            <person name="Lelaure V."/>
            <person name="Mottier S."/>
            <person name="Galibert F."/>
            <person name="Aves S.J."/>
            <person name="Xiang Z."/>
            <person name="Hunt C."/>
            <person name="Moore K."/>
            <person name="Hurst S.M."/>
            <person name="Lucas M."/>
            <person name="Rochet M."/>
            <person name="Gaillardin C."/>
            <person name="Tallada V.A."/>
            <person name="Garzon A."/>
            <person name="Thode G."/>
            <person name="Daga R.R."/>
            <person name="Cruzado L."/>
            <person name="Jimenez J."/>
            <person name="Sanchez M."/>
            <person name="del Rey F."/>
            <person name="Benito J."/>
            <person name="Dominguez A."/>
            <person name="Revuelta J.L."/>
            <person name="Moreno S."/>
            <person name="Armstrong J."/>
            <person name="Forsburg S.L."/>
            <person name="Cerutti L."/>
            <person name="Lowe T."/>
            <person name="McCombie W.R."/>
            <person name="Paulsen I."/>
            <person name="Potashkin J."/>
            <person name="Shpakovski G.V."/>
            <person name="Ussery D."/>
            <person name="Barrell B.G."/>
            <person name="Nurse P."/>
        </authorList>
    </citation>
    <scope>NUCLEOTIDE SEQUENCE [LARGE SCALE GENOMIC DNA]</scope>
    <source>
        <strain>972 / ATCC 24843</strain>
    </source>
</reference>
<name>TRPD_SCHPO</name>
<dbReference type="EC" id="2.4.2.18"/>
<dbReference type="EMBL" id="CU329671">
    <property type="protein sequence ID" value="CAA19028.1"/>
    <property type="molecule type" value="Genomic_DNA"/>
</dbReference>
<dbReference type="PIR" id="T39600">
    <property type="entry name" value="T39600"/>
</dbReference>
<dbReference type="RefSeq" id="NP_596757.1">
    <property type="nucleotide sequence ID" value="NM_001023777.2"/>
</dbReference>
<dbReference type="SMR" id="O60122"/>
<dbReference type="FunCoup" id="O60122">
    <property type="interactions" value="559"/>
</dbReference>
<dbReference type="STRING" id="284812.O60122"/>
<dbReference type="PaxDb" id="4896-SPBC16G5.08.1"/>
<dbReference type="EnsemblFungi" id="SPBC16G5.08.1">
    <property type="protein sequence ID" value="SPBC16G5.08.1:pep"/>
    <property type="gene ID" value="SPBC16G5.08"/>
</dbReference>
<dbReference type="GeneID" id="2540065"/>
<dbReference type="KEGG" id="spo:2540065"/>
<dbReference type="PomBase" id="SPBC16G5.08">
    <property type="gene designation" value="trp4"/>
</dbReference>
<dbReference type="VEuPathDB" id="FungiDB:SPBC16G5.08"/>
<dbReference type="eggNOG" id="KOG1438">
    <property type="taxonomic scope" value="Eukaryota"/>
</dbReference>
<dbReference type="HOGENOM" id="CLU_034315_2_1_1"/>
<dbReference type="InParanoid" id="O60122"/>
<dbReference type="OMA" id="IRTFFNM"/>
<dbReference type="PhylomeDB" id="O60122"/>
<dbReference type="UniPathway" id="UPA00035">
    <property type="reaction ID" value="UER00041"/>
</dbReference>
<dbReference type="PRO" id="PR:O60122"/>
<dbReference type="Proteomes" id="UP000002485">
    <property type="component" value="Chromosome II"/>
</dbReference>
<dbReference type="GO" id="GO:0005829">
    <property type="term" value="C:cytosol"/>
    <property type="evidence" value="ECO:0007005"/>
    <property type="project" value="PomBase"/>
</dbReference>
<dbReference type="GO" id="GO:0005634">
    <property type="term" value="C:nucleus"/>
    <property type="evidence" value="ECO:0007005"/>
    <property type="project" value="PomBase"/>
</dbReference>
<dbReference type="GO" id="GO:0004048">
    <property type="term" value="F:anthranilate phosphoribosyltransferase activity"/>
    <property type="evidence" value="ECO:0000266"/>
    <property type="project" value="PomBase"/>
</dbReference>
<dbReference type="GO" id="GO:0000162">
    <property type="term" value="P:L-tryptophan biosynthetic process"/>
    <property type="evidence" value="ECO:0000269"/>
    <property type="project" value="PomBase"/>
</dbReference>
<dbReference type="FunFam" id="3.40.1030.10:FF:000002">
    <property type="entry name" value="Anthranilate phosphoribosyltransferase"/>
    <property type="match status" value="1"/>
</dbReference>
<dbReference type="Gene3D" id="3.40.1030.10">
    <property type="entry name" value="Nucleoside phosphorylase/phosphoribosyltransferase catalytic domain"/>
    <property type="match status" value="1"/>
</dbReference>
<dbReference type="HAMAP" id="MF_00211">
    <property type="entry name" value="TrpD"/>
    <property type="match status" value="1"/>
</dbReference>
<dbReference type="InterPro" id="IPR005940">
    <property type="entry name" value="Anthranilate_Pribosyl_Tfrase"/>
</dbReference>
<dbReference type="InterPro" id="IPR000312">
    <property type="entry name" value="Glycosyl_Trfase_fam3"/>
</dbReference>
<dbReference type="InterPro" id="IPR035902">
    <property type="entry name" value="Nuc_phospho_transferase"/>
</dbReference>
<dbReference type="NCBIfam" id="TIGR01245">
    <property type="entry name" value="trpD"/>
    <property type="match status" value="1"/>
</dbReference>
<dbReference type="PANTHER" id="PTHR43285">
    <property type="entry name" value="ANTHRANILATE PHOSPHORIBOSYLTRANSFERASE"/>
    <property type="match status" value="1"/>
</dbReference>
<dbReference type="PANTHER" id="PTHR43285:SF2">
    <property type="entry name" value="ANTHRANILATE PHOSPHORIBOSYLTRANSFERASE"/>
    <property type="match status" value="1"/>
</dbReference>
<dbReference type="Pfam" id="PF00591">
    <property type="entry name" value="Glycos_transf_3"/>
    <property type="match status" value="1"/>
</dbReference>
<dbReference type="SUPFAM" id="SSF52418">
    <property type="entry name" value="Nucleoside phosphorylase/phosphoribosyltransferase catalytic domain"/>
    <property type="match status" value="1"/>
</dbReference>
<keyword id="KW-0028">Amino-acid biosynthesis</keyword>
<keyword id="KW-0057">Aromatic amino acid biosynthesis</keyword>
<keyword id="KW-0328">Glycosyltransferase</keyword>
<keyword id="KW-1185">Reference proteome</keyword>
<keyword id="KW-0808">Transferase</keyword>
<keyword id="KW-0822">Tryptophan biosynthesis</keyword>